<feature type="chain" id="PRO_0000261937" description="Nucleotide-binding protein Francci3_0558">
    <location>
        <begin position="1"/>
        <end position="162"/>
    </location>
</feature>
<keyword id="KW-0547">Nucleotide-binding</keyword>
<keyword id="KW-1185">Reference proteome</keyword>
<name>Y558_FRACC</name>
<dbReference type="EMBL" id="CP000249">
    <property type="protein sequence ID" value="ABD09942.1"/>
    <property type="molecule type" value="Genomic_DNA"/>
</dbReference>
<dbReference type="RefSeq" id="WP_011435018.1">
    <property type="nucleotide sequence ID" value="NZ_LRTJ01000013.1"/>
</dbReference>
<dbReference type="SMR" id="Q2JFK0"/>
<dbReference type="KEGG" id="fra:Francci3_0558"/>
<dbReference type="eggNOG" id="COG1666">
    <property type="taxonomic scope" value="Bacteria"/>
</dbReference>
<dbReference type="HOGENOM" id="CLU_099839_0_0_11"/>
<dbReference type="OrthoDB" id="9801447at2"/>
<dbReference type="PhylomeDB" id="Q2JFK0"/>
<dbReference type="Proteomes" id="UP000001937">
    <property type="component" value="Chromosome"/>
</dbReference>
<dbReference type="GO" id="GO:0005829">
    <property type="term" value="C:cytosol"/>
    <property type="evidence" value="ECO:0007669"/>
    <property type="project" value="TreeGrafter"/>
</dbReference>
<dbReference type="GO" id="GO:0000166">
    <property type="term" value="F:nucleotide binding"/>
    <property type="evidence" value="ECO:0007669"/>
    <property type="project" value="TreeGrafter"/>
</dbReference>
<dbReference type="CDD" id="cd11740">
    <property type="entry name" value="YajQ_like"/>
    <property type="match status" value="1"/>
</dbReference>
<dbReference type="Gene3D" id="3.30.70.860">
    <property type="match status" value="1"/>
</dbReference>
<dbReference type="Gene3D" id="3.30.70.990">
    <property type="entry name" value="YajQ-like, domain 2"/>
    <property type="match status" value="1"/>
</dbReference>
<dbReference type="HAMAP" id="MF_00632">
    <property type="entry name" value="YajQ"/>
    <property type="match status" value="1"/>
</dbReference>
<dbReference type="InterPro" id="IPR007551">
    <property type="entry name" value="DUF520"/>
</dbReference>
<dbReference type="InterPro" id="IPR035571">
    <property type="entry name" value="UPF0234-like_C"/>
</dbReference>
<dbReference type="InterPro" id="IPR035570">
    <property type="entry name" value="UPF0234_N"/>
</dbReference>
<dbReference type="InterPro" id="IPR036183">
    <property type="entry name" value="YajQ-like_sf"/>
</dbReference>
<dbReference type="NCBIfam" id="NF003819">
    <property type="entry name" value="PRK05412.1"/>
    <property type="match status" value="1"/>
</dbReference>
<dbReference type="PANTHER" id="PTHR30476">
    <property type="entry name" value="UPF0234 PROTEIN YAJQ"/>
    <property type="match status" value="1"/>
</dbReference>
<dbReference type="PANTHER" id="PTHR30476:SF0">
    <property type="entry name" value="UPF0234 PROTEIN YAJQ"/>
    <property type="match status" value="1"/>
</dbReference>
<dbReference type="Pfam" id="PF04461">
    <property type="entry name" value="DUF520"/>
    <property type="match status" value="1"/>
</dbReference>
<dbReference type="SUPFAM" id="SSF89963">
    <property type="entry name" value="YajQ-like"/>
    <property type="match status" value="2"/>
</dbReference>
<reference key="1">
    <citation type="journal article" date="2007" name="Genome Res.">
        <title>Genome characteristics of facultatively symbiotic Frankia sp. strains reflect host range and host plant biogeography.</title>
        <authorList>
            <person name="Normand P."/>
            <person name="Lapierre P."/>
            <person name="Tisa L.S."/>
            <person name="Gogarten J.P."/>
            <person name="Alloisio N."/>
            <person name="Bagnarol E."/>
            <person name="Bassi C.A."/>
            <person name="Berry A.M."/>
            <person name="Bickhart D.M."/>
            <person name="Choisne N."/>
            <person name="Couloux A."/>
            <person name="Cournoyer B."/>
            <person name="Cruveiller S."/>
            <person name="Daubin V."/>
            <person name="Demange N."/>
            <person name="Francino M.P."/>
            <person name="Goltsman E."/>
            <person name="Huang Y."/>
            <person name="Kopp O.R."/>
            <person name="Labarre L."/>
            <person name="Lapidus A."/>
            <person name="Lavire C."/>
            <person name="Marechal J."/>
            <person name="Martinez M."/>
            <person name="Mastronunzio J.E."/>
            <person name="Mullin B.C."/>
            <person name="Niemann J."/>
            <person name="Pujic P."/>
            <person name="Rawnsley T."/>
            <person name="Rouy Z."/>
            <person name="Schenowitz C."/>
            <person name="Sellstedt A."/>
            <person name="Tavares F."/>
            <person name="Tomkins J.P."/>
            <person name="Vallenet D."/>
            <person name="Valverde C."/>
            <person name="Wall L.G."/>
            <person name="Wang Y."/>
            <person name="Medigue C."/>
            <person name="Benson D.R."/>
        </authorList>
    </citation>
    <scope>NUCLEOTIDE SEQUENCE [LARGE SCALE GENOMIC DNA]</scope>
    <source>
        <strain>DSM 45818 / CECT 9043 / HFP020203 / CcI3</strain>
    </source>
</reference>
<proteinExistence type="inferred from homology"/>
<evidence type="ECO:0000255" key="1">
    <source>
        <dbReference type="HAMAP-Rule" id="MF_00632"/>
    </source>
</evidence>
<organism>
    <name type="scientific">Frankia casuarinae (strain DSM 45818 / CECT 9043 / HFP020203 / CcI3)</name>
    <dbReference type="NCBI Taxonomy" id="106370"/>
    <lineage>
        <taxon>Bacteria</taxon>
        <taxon>Bacillati</taxon>
        <taxon>Actinomycetota</taxon>
        <taxon>Actinomycetes</taxon>
        <taxon>Frankiales</taxon>
        <taxon>Frankiaceae</taxon>
        <taxon>Frankia</taxon>
    </lineage>
</organism>
<gene>
    <name type="ordered locus">Francci3_0558</name>
</gene>
<comment type="function">
    <text evidence="1">Nucleotide-binding protein.</text>
</comment>
<comment type="similarity">
    <text evidence="1">Belongs to the YajQ family.</text>
</comment>
<accession>Q2JFK0</accession>
<sequence length="162" mass="18100">MADPSFDIVSKVDAQEIDNAVNQTVKEIRTRFDFRDTGASATLSGESILLVANTDERVKAVLDVLQEKFVKRGISLKALTFDEPKPSGKEFRLPVTVQQGIAEDKAKAIAKKIRTDGPKGVQAQIQGDQLRVTGKKRDDLQRVIQILKTEDFEVPLQFVNYR</sequence>
<protein>
    <recommendedName>
        <fullName evidence="1">Nucleotide-binding protein Francci3_0558</fullName>
    </recommendedName>
</protein>